<accession>P27067</accession>
<sequence length="16" mass="1648">PQTETKASVGFKAGVK</sequence>
<proteinExistence type="evidence at protein level"/>
<organism>
    <name type="scientific">Vigna unguiculata subsp. unguiculata</name>
    <name type="common">Cowpea</name>
    <name type="synonym">Vigna sinensis</name>
    <dbReference type="NCBI Taxonomy" id="3920"/>
    <lineage>
        <taxon>Eukaryota</taxon>
        <taxon>Viridiplantae</taxon>
        <taxon>Streptophyta</taxon>
        <taxon>Embryophyta</taxon>
        <taxon>Tracheophyta</taxon>
        <taxon>Spermatophyta</taxon>
        <taxon>Magnoliopsida</taxon>
        <taxon>eudicotyledons</taxon>
        <taxon>Gunneridae</taxon>
        <taxon>Pentapetalae</taxon>
        <taxon>rosids</taxon>
        <taxon>fabids</taxon>
        <taxon>Fabales</taxon>
        <taxon>Fabaceae</taxon>
        <taxon>Papilionoideae</taxon>
        <taxon>50 kb inversion clade</taxon>
        <taxon>NPAAA clade</taxon>
        <taxon>indigoferoid/millettioid clade</taxon>
        <taxon>Phaseoleae</taxon>
        <taxon>Vigna</taxon>
    </lineage>
</organism>
<gene>
    <name type="primary">rbcL</name>
</gene>
<dbReference type="EC" id="4.1.1.39"/>
<dbReference type="iPTMnet" id="P27067"/>
<dbReference type="GO" id="GO:0009507">
    <property type="term" value="C:chloroplast"/>
    <property type="evidence" value="ECO:0007669"/>
    <property type="project" value="UniProtKB-SubCell"/>
</dbReference>
<dbReference type="GO" id="GO:0004497">
    <property type="term" value="F:monooxygenase activity"/>
    <property type="evidence" value="ECO:0007669"/>
    <property type="project" value="UniProtKB-KW"/>
</dbReference>
<dbReference type="GO" id="GO:0016984">
    <property type="term" value="F:ribulose-bisphosphate carboxylase activity"/>
    <property type="evidence" value="ECO:0007669"/>
    <property type="project" value="UniProtKB-EC"/>
</dbReference>
<dbReference type="GO" id="GO:0009853">
    <property type="term" value="P:photorespiration"/>
    <property type="evidence" value="ECO:0007669"/>
    <property type="project" value="UniProtKB-KW"/>
</dbReference>
<dbReference type="GO" id="GO:0019253">
    <property type="term" value="P:reductive pentose-phosphate cycle"/>
    <property type="evidence" value="ECO:0007669"/>
    <property type="project" value="UniProtKB-KW"/>
</dbReference>
<evidence type="ECO:0000250" key="1"/>
<evidence type="ECO:0000269" key="2">
    <source>
    </source>
</evidence>
<evidence type="ECO:0000305" key="3"/>
<protein>
    <recommendedName>
        <fullName>Ribulose bisphosphate carboxylase large chain</fullName>
        <shortName>RuBisCO large subunit</shortName>
        <ecNumber>4.1.1.39</ecNumber>
    </recommendedName>
</protein>
<comment type="function">
    <text>RuBisCO catalyzes two reactions: the carboxylation of D-ribulose 1,5-bisphosphate, the primary event in carbon dioxide fixation, as well as the oxidative fragmentation of the pentose substrate in the photorespiration process. Both reactions occur simultaneously and in competition at the same active site.</text>
</comment>
<comment type="catalytic activity">
    <reaction>
        <text>2 (2R)-3-phosphoglycerate + 2 H(+) = D-ribulose 1,5-bisphosphate + CO2 + H2O</text>
        <dbReference type="Rhea" id="RHEA:23124"/>
        <dbReference type="ChEBI" id="CHEBI:15377"/>
        <dbReference type="ChEBI" id="CHEBI:15378"/>
        <dbReference type="ChEBI" id="CHEBI:16526"/>
        <dbReference type="ChEBI" id="CHEBI:57870"/>
        <dbReference type="ChEBI" id="CHEBI:58272"/>
        <dbReference type="EC" id="4.1.1.39"/>
    </reaction>
</comment>
<comment type="catalytic activity">
    <reaction>
        <text>D-ribulose 1,5-bisphosphate + O2 = 2-phosphoglycolate + (2R)-3-phosphoglycerate + 2 H(+)</text>
        <dbReference type="Rhea" id="RHEA:36631"/>
        <dbReference type="ChEBI" id="CHEBI:15378"/>
        <dbReference type="ChEBI" id="CHEBI:15379"/>
        <dbReference type="ChEBI" id="CHEBI:57870"/>
        <dbReference type="ChEBI" id="CHEBI:58033"/>
        <dbReference type="ChEBI" id="CHEBI:58272"/>
    </reaction>
</comment>
<comment type="subunit">
    <text evidence="1">Heterohexadecamer of 8 large chains and 8 small chains.</text>
</comment>
<comment type="subcellular location">
    <subcellularLocation>
        <location>Plastid</location>
        <location>Chloroplast</location>
    </subcellularLocation>
</comment>
<comment type="miscellaneous">
    <text evidence="1">The basic functional RuBisCO is composed of a large chain homodimer in a 'head-to-tail' conformation. In form I RuBisCO this homodimer is arranged in a barrel-like tetramer with the small subunits forming a tetrameric 'cap' on each end of the 'barrel' (By similarity).</text>
</comment>
<comment type="similarity">
    <text evidence="3">Belongs to the RuBisCO large chain family. Type I subfamily.</text>
</comment>
<keyword id="KW-0007">Acetylation</keyword>
<keyword id="KW-0113">Calvin cycle</keyword>
<keyword id="KW-0120">Carbon dioxide fixation</keyword>
<keyword id="KW-0150">Chloroplast</keyword>
<keyword id="KW-0903">Direct protein sequencing</keyword>
<keyword id="KW-0456">Lyase</keyword>
<keyword id="KW-0488">Methylation</keyword>
<keyword id="KW-0503">Monooxygenase</keyword>
<keyword id="KW-0560">Oxidoreductase</keyword>
<keyword id="KW-0601">Photorespiration</keyword>
<keyword id="KW-0602">Photosynthesis</keyword>
<keyword id="KW-0934">Plastid</keyword>
<reference key="1">
    <citation type="journal article" date="1992" name="Plant Physiol.">
        <title>Posttranslational modifications in the amino-terminal region of the large subunit of ribulose-1,5-bisphosphate carboxylase/oxygenase from several plant species.</title>
        <authorList>
            <person name="Houtz R.L."/>
            <person name="Poneleit L."/>
            <person name="Jones S.B."/>
            <person name="Royer M."/>
            <person name="Stults J.T."/>
        </authorList>
    </citation>
    <scope>PROTEIN SEQUENCE</scope>
    <scope>METHYLATION AT LYS-12</scope>
    <scope>ACETYLATION AT PRO-1</scope>
</reference>
<geneLocation type="chloroplast"/>
<name>RBL_VIGUU</name>
<feature type="chain" id="PRO_0000062611" description="Ribulose bisphosphate carboxylase large chain">
    <location>
        <begin position="1"/>
        <end position="16" status="greater than"/>
    </location>
</feature>
<feature type="modified residue" description="N-acetylproline" evidence="2">
    <location>
        <position position="1"/>
    </location>
</feature>
<feature type="modified residue" description="N6,N6,N6-trimethyllysine" evidence="2">
    <location>
        <position position="12"/>
    </location>
</feature>
<feature type="non-terminal residue">
    <location>
        <position position="16"/>
    </location>
</feature>